<reference key="1">
    <citation type="journal article" date="2009" name="PLoS Genet.">
        <title>Organised genome dynamics in the Escherichia coli species results in highly diverse adaptive paths.</title>
        <authorList>
            <person name="Touchon M."/>
            <person name="Hoede C."/>
            <person name="Tenaillon O."/>
            <person name="Barbe V."/>
            <person name="Baeriswyl S."/>
            <person name="Bidet P."/>
            <person name="Bingen E."/>
            <person name="Bonacorsi S."/>
            <person name="Bouchier C."/>
            <person name="Bouvet O."/>
            <person name="Calteau A."/>
            <person name="Chiapello H."/>
            <person name="Clermont O."/>
            <person name="Cruveiller S."/>
            <person name="Danchin A."/>
            <person name="Diard M."/>
            <person name="Dossat C."/>
            <person name="Karoui M.E."/>
            <person name="Frapy E."/>
            <person name="Garry L."/>
            <person name="Ghigo J.M."/>
            <person name="Gilles A.M."/>
            <person name="Johnson J."/>
            <person name="Le Bouguenec C."/>
            <person name="Lescat M."/>
            <person name="Mangenot S."/>
            <person name="Martinez-Jehanne V."/>
            <person name="Matic I."/>
            <person name="Nassif X."/>
            <person name="Oztas S."/>
            <person name="Petit M.A."/>
            <person name="Pichon C."/>
            <person name="Rouy Z."/>
            <person name="Ruf C.S."/>
            <person name="Schneider D."/>
            <person name="Tourret J."/>
            <person name="Vacherie B."/>
            <person name="Vallenet D."/>
            <person name="Medigue C."/>
            <person name="Rocha E.P.C."/>
            <person name="Denamur E."/>
        </authorList>
    </citation>
    <scope>NUCLEOTIDE SEQUENCE [LARGE SCALE GENOMIC DNA]</scope>
    <source>
        <strain>55989 / EAEC</strain>
    </source>
</reference>
<name>HSCA_ECO55</name>
<evidence type="ECO:0000255" key="1">
    <source>
        <dbReference type="HAMAP-Rule" id="MF_00679"/>
    </source>
</evidence>
<gene>
    <name evidence="1" type="primary">hscA</name>
    <name type="ordered locus">EC55989_2811</name>
</gene>
<dbReference type="EMBL" id="CU928145">
    <property type="protein sequence ID" value="CAU98684.1"/>
    <property type="molecule type" value="Genomic_DNA"/>
</dbReference>
<dbReference type="RefSeq" id="WP_001196613.1">
    <property type="nucleotide sequence ID" value="NZ_CP028304.1"/>
</dbReference>
<dbReference type="SMR" id="B7LDB8"/>
<dbReference type="GeneID" id="93774610"/>
<dbReference type="KEGG" id="eck:EC55989_2811"/>
<dbReference type="HOGENOM" id="CLU_005965_2_1_6"/>
<dbReference type="Proteomes" id="UP000000746">
    <property type="component" value="Chromosome"/>
</dbReference>
<dbReference type="GO" id="GO:0005524">
    <property type="term" value="F:ATP binding"/>
    <property type="evidence" value="ECO:0007669"/>
    <property type="project" value="UniProtKB-KW"/>
</dbReference>
<dbReference type="GO" id="GO:0016887">
    <property type="term" value="F:ATP hydrolysis activity"/>
    <property type="evidence" value="ECO:0007669"/>
    <property type="project" value="UniProtKB-UniRule"/>
</dbReference>
<dbReference type="GO" id="GO:0140662">
    <property type="term" value="F:ATP-dependent protein folding chaperone"/>
    <property type="evidence" value="ECO:0007669"/>
    <property type="project" value="InterPro"/>
</dbReference>
<dbReference type="GO" id="GO:0051082">
    <property type="term" value="F:unfolded protein binding"/>
    <property type="evidence" value="ECO:0007669"/>
    <property type="project" value="InterPro"/>
</dbReference>
<dbReference type="GO" id="GO:0016226">
    <property type="term" value="P:iron-sulfur cluster assembly"/>
    <property type="evidence" value="ECO:0007669"/>
    <property type="project" value="InterPro"/>
</dbReference>
<dbReference type="CDD" id="cd10236">
    <property type="entry name" value="ASKHA_NBD_HSP70_HscA"/>
    <property type="match status" value="1"/>
</dbReference>
<dbReference type="FunFam" id="1.20.1270.10:FF:000006">
    <property type="entry name" value="Chaperone protein HscA"/>
    <property type="match status" value="1"/>
</dbReference>
<dbReference type="FunFam" id="3.30.420.40:FF:000046">
    <property type="entry name" value="Chaperone protein HscA"/>
    <property type="match status" value="1"/>
</dbReference>
<dbReference type="FunFam" id="3.90.640.10:FF:000013">
    <property type="entry name" value="Chaperone protein HscA"/>
    <property type="match status" value="1"/>
</dbReference>
<dbReference type="FunFam" id="2.60.34.10:FF:000005">
    <property type="entry name" value="Chaperone protein HscA homolog"/>
    <property type="match status" value="1"/>
</dbReference>
<dbReference type="FunFam" id="3.30.420.40:FF:000020">
    <property type="entry name" value="Chaperone protein HscA homolog"/>
    <property type="match status" value="1"/>
</dbReference>
<dbReference type="Gene3D" id="1.20.1270.10">
    <property type="match status" value="1"/>
</dbReference>
<dbReference type="Gene3D" id="3.30.420.40">
    <property type="match status" value="2"/>
</dbReference>
<dbReference type="Gene3D" id="3.90.640.10">
    <property type="entry name" value="Actin, Chain A, domain 4"/>
    <property type="match status" value="1"/>
</dbReference>
<dbReference type="Gene3D" id="2.60.34.10">
    <property type="entry name" value="Substrate Binding Domain Of DNAk, Chain A, domain 1"/>
    <property type="match status" value="1"/>
</dbReference>
<dbReference type="HAMAP" id="MF_00679">
    <property type="entry name" value="HscA"/>
    <property type="match status" value="1"/>
</dbReference>
<dbReference type="InterPro" id="IPR043129">
    <property type="entry name" value="ATPase_NBD"/>
</dbReference>
<dbReference type="InterPro" id="IPR018181">
    <property type="entry name" value="Heat_shock_70_CS"/>
</dbReference>
<dbReference type="InterPro" id="IPR042039">
    <property type="entry name" value="HscA_NBD"/>
</dbReference>
<dbReference type="InterPro" id="IPR029048">
    <property type="entry name" value="HSP70_C_sf"/>
</dbReference>
<dbReference type="InterPro" id="IPR029047">
    <property type="entry name" value="HSP70_peptide-bd_sf"/>
</dbReference>
<dbReference type="InterPro" id="IPR013126">
    <property type="entry name" value="Hsp_70_fam"/>
</dbReference>
<dbReference type="InterPro" id="IPR010236">
    <property type="entry name" value="ISC_FeS_clus_asmbl_HscA"/>
</dbReference>
<dbReference type="NCBIfam" id="TIGR01991">
    <property type="entry name" value="HscA"/>
    <property type="match status" value="1"/>
</dbReference>
<dbReference type="NCBIfam" id="NF003520">
    <property type="entry name" value="PRK05183.1"/>
    <property type="match status" value="1"/>
</dbReference>
<dbReference type="PANTHER" id="PTHR19375">
    <property type="entry name" value="HEAT SHOCK PROTEIN 70KDA"/>
    <property type="match status" value="1"/>
</dbReference>
<dbReference type="Pfam" id="PF00012">
    <property type="entry name" value="HSP70"/>
    <property type="match status" value="1"/>
</dbReference>
<dbReference type="PRINTS" id="PR00301">
    <property type="entry name" value="HEATSHOCK70"/>
</dbReference>
<dbReference type="SUPFAM" id="SSF53067">
    <property type="entry name" value="Actin-like ATPase domain"/>
    <property type="match status" value="2"/>
</dbReference>
<dbReference type="SUPFAM" id="SSF100934">
    <property type="entry name" value="Heat shock protein 70kD (HSP70), C-terminal subdomain"/>
    <property type="match status" value="1"/>
</dbReference>
<dbReference type="SUPFAM" id="SSF100920">
    <property type="entry name" value="Heat shock protein 70kD (HSP70), peptide-binding domain"/>
    <property type="match status" value="1"/>
</dbReference>
<dbReference type="PROSITE" id="PS00297">
    <property type="entry name" value="HSP70_1"/>
    <property type="match status" value="1"/>
</dbReference>
<dbReference type="PROSITE" id="PS00329">
    <property type="entry name" value="HSP70_2"/>
    <property type="match status" value="1"/>
</dbReference>
<dbReference type="PROSITE" id="PS01036">
    <property type="entry name" value="HSP70_3"/>
    <property type="match status" value="1"/>
</dbReference>
<feature type="chain" id="PRO_1000147715" description="Chaperone protein HscA">
    <location>
        <begin position="1"/>
        <end position="616"/>
    </location>
</feature>
<organism>
    <name type="scientific">Escherichia coli (strain 55989 / EAEC)</name>
    <dbReference type="NCBI Taxonomy" id="585055"/>
    <lineage>
        <taxon>Bacteria</taxon>
        <taxon>Pseudomonadati</taxon>
        <taxon>Pseudomonadota</taxon>
        <taxon>Gammaproteobacteria</taxon>
        <taxon>Enterobacterales</taxon>
        <taxon>Enterobacteriaceae</taxon>
        <taxon>Escherichia</taxon>
    </lineage>
</organism>
<proteinExistence type="inferred from homology"/>
<sequence length="616" mass="65652">MALLQISEPGLSAAPHQRRLAAGIDLGTTNSLVATVRSGQAETLADHEGRHLLPSVVHYQQQGHSVGYDARTNAALDTANTISSVKRLMGRSLADIQQRYPHLPYQFQASENGLPMIETAAGLLNPVRVSADILKALAARATEALAGELDGVVITVPAYFDDAQRQGTKDAARLAGLHVLRLLNEPTAAAIAYGLDSGQEGVIAVYDLGGGTFDISILRLSRGVFEVLATGGDSALGGDDFDHLLADYIREQAGIPDRSDNRVQRELLDAAIAAKIALSDADSVTVNVAGWQGEISREQFNELIAPLVKRTLLACRRALKDAGVEADEVLEVVMVGGSTRVPLVRERVGEFFGRPPLTSIDPDKVVAIGAAIQADILVGNKPDSEMLLLDVIPLSLGLETMGGLVEKVIPRNTTIPVARAQDFTTFKDGQTAMSIHVMQGERELVQDCRSLARFALRGIPALPAGGAHIRVTFQVDADGLLSVTAMEKSTGVEASIQVKPSYGLTDSEIASMIKDSMSYAEQDVKARMLAEQKVEAARVLESLHGALAADAALLSAAERQVIDDAAAHLSEVAQGDDVDAIEQAIKNVDKQTQDFAARRMDQSVRRALKGHSVDEV</sequence>
<comment type="function">
    <text evidence="1">Chaperone involved in the maturation of iron-sulfur cluster-containing proteins. Has a low intrinsic ATPase activity which is markedly stimulated by HscB. Involved in the maturation of IscU.</text>
</comment>
<comment type="similarity">
    <text evidence="1">Belongs to the heat shock protein 70 family.</text>
</comment>
<keyword id="KW-0067">ATP-binding</keyword>
<keyword id="KW-0143">Chaperone</keyword>
<keyword id="KW-0547">Nucleotide-binding</keyword>
<keyword id="KW-1185">Reference proteome</keyword>
<accession>B7LDB8</accession>
<protein>
    <recommendedName>
        <fullName evidence="1">Chaperone protein HscA</fullName>
    </recommendedName>
    <alternativeName>
        <fullName evidence="1">Hsc66</fullName>
    </alternativeName>
</protein>